<gene>
    <name type="primary">cyp508C1</name>
    <name type="ORF">DDB_G0292792</name>
</gene>
<reference key="1">
    <citation type="journal article" date="2005" name="Nature">
        <title>The genome of the social amoeba Dictyostelium discoideum.</title>
        <authorList>
            <person name="Eichinger L."/>
            <person name="Pachebat J.A."/>
            <person name="Gloeckner G."/>
            <person name="Rajandream M.A."/>
            <person name="Sucgang R."/>
            <person name="Berriman M."/>
            <person name="Song J."/>
            <person name="Olsen R."/>
            <person name="Szafranski K."/>
            <person name="Xu Q."/>
            <person name="Tunggal B."/>
            <person name="Kummerfeld S."/>
            <person name="Madera M."/>
            <person name="Konfortov B.A."/>
            <person name="Rivero F."/>
            <person name="Bankier A.T."/>
            <person name="Lehmann R."/>
            <person name="Hamlin N."/>
            <person name="Davies R."/>
            <person name="Gaudet P."/>
            <person name="Fey P."/>
            <person name="Pilcher K."/>
            <person name="Chen G."/>
            <person name="Saunders D."/>
            <person name="Sodergren E.J."/>
            <person name="Davis P."/>
            <person name="Kerhornou A."/>
            <person name="Nie X."/>
            <person name="Hall N."/>
            <person name="Anjard C."/>
            <person name="Hemphill L."/>
            <person name="Bason N."/>
            <person name="Farbrother P."/>
            <person name="Desany B."/>
            <person name="Just E."/>
            <person name="Morio T."/>
            <person name="Rost R."/>
            <person name="Churcher C.M."/>
            <person name="Cooper J."/>
            <person name="Haydock S."/>
            <person name="van Driessche N."/>
            <person name="Cronin A."/>
            <person name="Goodhead I."/>
            <person name="Muzny D.M."/>
            <person name="Mourier T."/>
            <person name="Pain A."/>
            <person name="Lu M."/>
            <person name="Harper D."/>
            <person name="Lindsay R."/>
            <person name="Hauser H."/>
            <person name="James K.D."/>
            <person name="Quiles M."/>
            <person name="Madan Babu M."/>
            <person name="Saito T."/>
            <person name="Buchrieser C."/>
            <person name="Wardroper A."/>
            <person name="Felder M."/>
            <person name="Thangavelu M."/>
            <person name="Johnson D."/>
            <person name="Knights A."/>
            <person name="Loulseged H."/>
            <person name="Mungall K.L."/>
            <person name="Oliver K."/>
            <person name="Price C."/>
            <person name="Quail M.A."/>
            <person name="Urushihara H."/>
            <person name="Hernandez J."/>
            <person name="Rabbinowitsch E."/>
            <person name="Steffen D."/>
            <person name="Sanders M."/>
            <person name="Ma J."/>
            <person name="Kohara Y."/>
            <person name="Sharp S."/>
            <person name="Simmonds M.N."/>
            <person name="Spiegler S."/>
            <person name="Tivey A."/>
            <person name="Sugano S."/>
            <person name="White B."/>
            <person name="Walker D."/>
            <person name="Woodward J.R."/>
            <person name="Winckler T."/>
            <person name="Tanaka Y."/>
            <person name="Shaulsky G."/>
            <person name="Schleicher M."/>
            <person name="Weinstock G.M."/>
            <person name="Rosenthal A."/>
            <person name="Cox E.C."/>
            <person name="Chisholm R.L."/>
            <person name="Gibbs R.A."/>
            <person name="Loomis W.F."/>
            <person name="Platzer M."/>
            <person name="Kay R.R."/>
            <person name="Williams J.G."/>
            <person name="Dear P.H."/>
            <person name="Noegel A.A."/>
            <person name="Barrell B.G."/>
            <person name="Kuspa A."/>
        </authorList>
    </citation>
    <scope>NUCLEOTIDE SEQUENCE [LARGE SCALE GENOMIC DNA]</scope>
    <source>
        <strain>AX4</strain>
    </source>
</reference>
<protein>
    <recommendedName>
        <fullName>Probable cytochrome P450 508C1</fullName>
        <ecNumber>1.14.-.-</ecNumber>
    </recommendedName>
</protein>
<sequence>MELLNSLLLLFLIYLIHSFYIKNKRIHKNEAKGPIGFPLIGNMIQIGKTKPHIELMKLEKIYNQRILKIWLGDYYSVFLSDIDLIKDIFINKFENFSSRPKSPLTRLGTNDFRGINGSSGETWFKNKNIIVNAMKRANTKTIYTLLDNQVNDLIKEISKFESQNKSFNPKYYFRKFVLSTMFKYIFNEDVPYDENLENGKLSELTMEMENIFKTLKVGKLANSIEILETPYYYYLQKTDKVFKNIKKLIIEKYKNHNLSINPEKPRDLLDILINEYGTTDDDVLNITQVTLDMFMAGTDTTANTLEWIIIKLCNSPIHQEIAYNELKKVVSSKVIIDDSIKREITLSDRPNTPYIQAIIKETMRMHPVVVFGLPRYCENDIFIGDENYFIPKGCKVFINFHSIGYNEKYFKDPYKFEPNRFLENSNNSMDSFFPFGLGNRVCLGRQLANDQLYLVIANLILKYKLKTIDENKINEDGIFGLTVSPNKYKINLESR</sequence>
<keyword id="KW-0349">Heme</keyword>
<keyword id="KW-0408">Iron</keyword>
<keyword id="KW-0472">Membrane</keyword>
<keyword id="KW-0479">Metal-binding</keyword>
<keyword id="KW-0503">Monooxygenase</keyword>
<keyword id="KW-0560">Oxidoreductase</keyword>
<keyword id="KW-1185">Reference proteome</keyword>
<keyword id="KW-0812">Transmembrane</keyword>
<keyword id="KW-1133">Transmembrane helix</keyword>
<proteinExistence type="inferred from homology"/>
<organism>
    <name type="scientific">Dictyostelium discoideum</name>
    <name type="common">Social amoeba</name>
    <dbReference type="NCBI Taxonomy" id="44689"/>
    <lineage>
        <taxon>Eukaryota</taxon>
        <taxon>Amoebozoa</taxon>
        <taxon>Evosea</taxon>
        <taxon>Eumycetozoa</taxon>
        <taxon>Dictyostelia</taxon>
        <taxon>Dictyosteliales</taxon>
        <taxon>Dictyosteliaceae</taxon>
        <taxon>Dictyostelium</taxon>
    </lineage>
</organism>
<accession>Q54CS3</accession>
<name>C508C_DICDI</name>
<comment type="cofactor">
    <cofactor evidence="1">
        <name>heme</name>
        <dbReference type="ChEBI" id="CHEBI:30413"/>
    </cofactor>
</comment>
<comment type="subcellular location">
    <subcellularLocation>
        <location evidence="3">Membrane</location>
        <topology evidence="3">Single-pass membrane protein</topology>
    </subcellularLocation>
</comment>
<comment type="similarity">
    <text evidence="3">Belongs to the cytochrome P450 family.</text>
</comment>
<dbReference type="EC" id="1.14.-.-"/>
<dbReference type="EMBL" id="AAFI02000196">
    <property type="protein sequence ID" value="EAL61070.1"/>
    <property type="molecule type" value="Genomic_DNA"/>
</dbReference>
<dbReference type="RefSeq" id="XP_629468.1">
    <property type="nucleotide sequence ID" value="XM_629466.1"/>
</dbReference>
<dbReference type="SMR" id="Q54CS3"/>
<dbReference type="FunCoup" id="Q54CS3">
    <property type="interactions" value="7"/>
</dbReference>
<dbReference type="STRING" id="44689.Q54CS3"/>
<dbReference type="PaxDb" id="44689-DDB0232965"/>
<dbReference type="EnsemblProtists" id="EAL61070">
    <property type="protein sequence ID" value="EAL61070"/>
    <property type="gene ID" value="DDB_G0292792"/>
</dbReference>
<dbReference type="GeneID" id="8628858"/>
<dbReference type="KEGG" id="ddi:DDB_G0292792"/>
<dbReference type="dictyBase" id="DDB_G0292792">
    <property type="gene designation" value="cyp508C1"/>
</dbReference>
<dbReference type="VEuPathDB" id="AmoebaDB:DDB_G0292792"/>
<dbReference type="eggNOG" id="KOG0156">
    <property type="taxonomic scope" value="Eukaryota"/>
</dbReference>
<dbReference type="HOGENOM" id="CLU_001570_22_0_1"/>
<dbReference type="InParanoid" id="Q54CS3"/>
<dbReference type="OMA" id="EPCIQQG"/>
<dbReference type="PhylomeDB" id="Q54CS3"/>
<dbReference type="Reactome" id="R-DDI-211935">
    <property type="pathway name" value="Fatty acids"/>
</dbReference>
<dbReference type="Reactome" id="R-DDI-211945">
    <property type="pathway name" value="Phase I - Functionalization of compounds"/>
</dbReference>
<dbReference type="Reactome" id="R-DDI-211958">
    <property type="pathway name" value="Miscellaneous substrates"/>
</dbReference>
<dbReference type="Reactome" id="R-DDI-211981">
    <property type="pathway name" value="Xenobiotics"/>
</dbReference>
<dbReference type="Reactome" id="R-DDI-211999">
    <property type="pathway name" value="CYP2E1 reactions"/>
</dbReference>
<dbReference type="Reactome" id="R-DDI-2142670">
    <property type="pathway name" value="Synthesis of epoxy (EET) and dihydroxyeicosatrienoic acids (DHET)"/>
</dbReference>
<dbReference type="Reactome" id="R-DDI-2142816">
    <property type="pathway name" value="Synthesis of (16-20)-hydroxyeicosatetraenoic acids (HETE)"/>
</dbReference>
<dbReference type="Reactome" id="R-DDI-5423646">
    <property type="pathway name" value="Aflatoxin activation and detoxification"/>
</dbReference>
<dbReference type="Reactome" id="R-DDI-9027307">
    <property type="pathway name" value="Biosynthesis of maresin-like SPMs"/>
</dbReference>
<dbReference type="Reactome" id="R-DDI-9749641">
    <property type="pathway name" value="Aspirin ADME"/>
</dbReference>
<dbReference type="Reactome" id="R-DDI-9753281">
    <property type="pathway name" value="Paracetamol ADME"/>
</dbReference>
<dbReference type="PRO" id="PR:Q54CS3"/>
<dbReference type="Proteomes" id="UP000002195">
    <property type="component" value="Chromosome 6"/>
</dbReference>
<dbReference type="GO" id="GO:0016020">
    <property type="term" value="C:membrane"/>
    <property type="evidence" value="ECO:0007669"/>
    <property type="project" value="UniProtKB-SubCell"/>
</dbReference>
<dbReference type="GO" id="GO:0020037">
    <property type="term" value="F:heme binding"/>
    <property type="evidence" value="ECO:0007669"/>
    <property type="project" value="InterPro"/>
</dbReference>
<dbReference type="GO" id="GO:0005506">
    <property type="term" value="F:iron ion binding"/>
    <property type="evidence" value="ECO:0007669"/>
    <property type="project" value="InterPro"/>
</dbReference>
<dbReference type="GO" id="GO:0004497">
    <property type="term" value="F:monooxygenase activity"/>
    <property type="evidence" value="ECO:0007669"/>
    <property type="project" value="UniProtKB-KW"/>
</dbReference>
<dbReference type="GO" id="GO:0016705">
    <property type="term" value="F:oxidoreductase activity, acting on paired donors, with incorporation or reduction of molecular oxygen"/>
    <property type="evidence" value="ECO:0007669"/>
    <property type="project" value="InterPro"/>
</dbReference>
<dbReference type="CDD" id="cd20617">
    <property type="entry name" value="CYP1_2-like"/>
    <property type="match status" value="1"/>
</dbReference>
<dbReference type="FunFam" id="1.10.630.10:FF:000068">
    <property type="entry name" value="Probable cytochrome P450 508A2"/>
    <property type="match status" value="1"/>
</dbReference>
<dbReference type="Gene3D" id="1.10.630.10">
    <property type="entry name" value="Cytochrome P450"/>
    <property type="match status" value="1"/>
</dbReference>
<dbReference type="InterPro" id="IPR001128">
    <property type="entry name" value="Cyt_P450"/>
</dbReference>
<dbReference type="InterPro" id="IPR017972">
    <property type="entry name" value="Cyt_P450_CS"/>
</dbReference>
<dbReference type="InterPro" id="IPR002401">
    <property type="entry name" value="Cyt_P450_E_grp-I"/>
</dbReference>
<dbReference type="InterPro" id="IPR036396">
    <property type="entry name" value="Cyt_P450_sf"/>
</dbReference>
<dbReference type="PANTHER" id="PTHR24303:SF31">
    <property type="entry name" value="CYTOCHROME P450 307A1-RELATED"/>
    <property type="match status" value="1"/>
</dbReference>
<dbReference type="PANTHER" id="PTHR24303">
    <property type="entry name" value="HEME-BINDING MONOOXYGENASE FAMILY"/>
    <property type="match status" value="1"/>
</dbReference>
<dbReference type="Pfam" id="PF00067">
    <property type="entry name" value="p450"/>
    <property type="match status" value="1"/>
</dbReference>
<dbReference type="PRINTS" id="PR00463">
    <property type="entry name" value="EP450I"/>
</dbReference>
<dbReference type="PRINTS" id="PR00385">
    <property type="entry name" value="P450"/>
</dbReference>
<dbReference type="SUPFAM" id="SSF48264">
    <property type="entry name" value="Cytochrome P450"/>
    <property type="match status" value="1"/>
</dbReference>
<dbReference type="PROSITE" id="PS00086">
    <property type="entry name" value="CYTOCHROME_P450"/>
    <property type="match status" value="1"/>
</dbReference>
<evidence type="ECO:0000250" key="1"/>
<evidence type="ECO:0000255" key="2"/>
<evidence type="ECO:0000305" key="3"/>
<feature type="chain" id="PRO_0000318811" description="Probable cytochrome P450 508C1">
    <location>
        <begin position="1"/>
        <end position="495"/>
    </location>
</feature>
<feature type="transmembrane region" description="Helical" evidence="2">
    <location>
        <begin position="3"/>
        <end position="21"/>
    </location>
</feature>
<feature type="binding site" description="axial binding residue" evidence="1">
    <location>
        <position position="442"/>
    </location>
    <ligand>
        <name>heme</name>
        <dbReference type="ChEBI" id="CHEBI:30413"/>
    </ligand>
    <ligandPart>
        <name>Fe</name>
        <dbReference type="ChEBI" id="CHEBI:18248"/>
    </ligandPart>
</feature>